<evidence type="ECO:0000255" key="1"/>
<evidence type="ECO:0000305" key="2"/>
<keyword id="KW-0204">Cytolysis</keyword>
<keyword id="KW-0354">Hemolysis</keyword>
<keyword id="KW-0732">Signal</keyword>
<keyword id="KW-0800">Toxin</keyword>
<keyword id="KW-0843">Virulence</keyword>
<reference key="1">
    <citation type="journal article" date="1993" name="Infect. Immun.">
        <title>The gamma-hemolysin locus of Staphylococcus aureus comprises three linked genes, two of which are identical to the genes for the F and S components of leukocidin.</title>
        <authorList>
            <person name="Cooney J.C."/>
            <person name="Kienle Z."/>
            <person name="Foster T.J."/>
            <person name="O'Toole P.W."/>
        </authorList>
    </citation>
    <scope>NUCLEOTIDE SEQUENCE [GENOMIC DNA]</scope>
</reference>
<reference key="2">
    <citation type="journal article" date="1988" name="J. Gen. Microbiol.">
        <title>Molecular cloning and genetic analysis of the determinant for gamma-lysin, a two-component toxin of Staphylococcus aureus.</title>
        <authorList>
            <person name="Cooney J.C."/>
            <person name="Mulvey M."/>
            <person name="Arbuthnott J."/>
            <person name="Foster T."/>
        </authorList>
    </citation>
    <scope>NUCLEOTIDE SEQUENCE [GENOMIC DNA]</scope>
</reference>
<protein>
    <recommendedName>
        <fullName>Gamma-hemolysin component C</fullName>
    </recommendedName>
    <alternativeName>
        <fullName>H-gamma-1</fullName>
    </alternativeName>
    <alternativeName>
        <fullName>H-gamma-I</fullName>
    </alternativeName>
</protein>
<accession>Q07227</accession>
<dbReference type="EMBL" id="L01055">
    <property type="protein sequence ID" value="AAA26638.1"/>
    <property type="molecule type" value="Genomic_DNA"/>
</dbReference>
<dbReference type="PIR" id="C49238">
    <property type="entry name" value="C49238"/>
</dbReference>
<dbReference type="RefSeq" id="WP_000916713.1">
    <property type="nucleotide sequence ID" value="NZ_WWFR01000003.1"/>
</dbReference>
<dbReference type="SMR" id="Q07227"/>
<dbReference type="TCDB" id="1.C.3.4.3">
    <property type="family name" value="the Alpha-hemolysin channel-forming toxin (Alphahl) family"/>
</dbReference>
<dbReference type="PHI-base" id="PHI:10309"/>
<dbReference type="PHI-base" id="PHI:123355"/>
<dbReference type="GO" id="GO:0005576">
    <property type="term" value="C:extracellular region"/>
    <property type="evidence" value="ECO:0007669"/>
    <property type="project" value="InterPro"/>
</dbReference>
<dbReference type="GO" id="GO:0090729">
    <property type="term" value="F:toxin activity"/>
    <property type="evidence" value="ECO:0007669"/>
    <property type="project" value="UniProtKB-KW"/>
</dbReference>
<dbReference type="GO" id="GO:0051715">
    <property type="term" value="P:cytolysis in another organism"/>
    <property type="evidence" value="ECO:0007669"/>
    <property type="project" value="InterPro"/>
</dbReference>
<dbReference type="Gene3D" id="2.70.240.10">
    <property type="entry name" value="Leukocidin/porin MspA"/>
    <property type="match status" value="1"/>
</dbReference>
<dbReference type="InterPro" id="IPR003963">
    <property type="entry name" value="Bi-component_toxin_staph"/>
</dbReference>
<dbReference type="InterPro" id="IPR016183">
    <property type="entry name" value="Leukocidin/Hemolysin_toxin"/>
</dbReference>
<dbReference type="InterPro" id="IPR036435">
    <property type="entry name" value="Leukocidin/porin_MspA_sf"/>
</dbReference>
<dbReference type="NCBIfam" id="TIGR01002">
    <property type="entry name" value="hlyII"/>
    <property type="match status" value="1"/>
</dbReference>
<dbReference type="Pfam" id="PF07968">
    <property type="entry name" value="Leukocidin"/>
    <property type="match status" value="1"/>
</dbReference>
<dbReference type="PRINTS" id="PR01468">
    <property type="entry name" value="BICOMPNTOXIN"/>
</dbReference>
<dbReference type="SUPFAM" id="SSF56959">
    <property type="entry name" value="Leukocidin-like"/>
    <property type="match status" value="1"/>
</dbReference>
<proteinExistence type="inferred from homology"/>
<gene>
    <name type="primary">hlgC</name>
</gene>
<name>HLGC_STAAU</name>
<sequence>MLKNKILTTTLSVSLLAPLANPLLENAKAANDTEDIGKGSDIEIIKRTEDKTSNKWGVTQNIQFDFVKDKKYNKDALILKMQGFISSRTTYYNYKKTNHVKAMRWPFQYNIGLKTNDKYVSLINYLPKNKIESTNVSQTLGYNIGGNFQSAPSLGGNGSFNYSKSISYTQQNYVSEVEQQNSKSVLWGVKANSFATESGQKSAFDSDLFVGYKPHSKDPRDYFVPDSELPPLVQSGFNPSFIATVSHEKGSSDTSEFEITYGRNMDVTHAIKRSTHYGNSYLDGHRVHNAFVNRNYTVKYEVNWKTHEIKVKGQN</sequence>
<comment type="function">
    <text>Toxin that seems to act by forming pores in the membrane of the cell. Has a hemolytic and a leucotoxic activity.</text>
</comment>
<comment type="subunit">
    <text>Toxicity requires sequential binding and synergistic association of a class S and a class F component which form heterooligomeric complexes. HlgC (class S) associates with HlgB (class F) thus forming an CB toxin.</text>
</comment>
<comment type="similarity">
    <text evidence="2">Belongs to the aerolysin family.</text>
</comment>
<feature type="signal peptide" evidence="1">
    <location>
        <begin position="1"/>
        <end position="29"/>
    </location>
</feature>
<feature type="chain" id="PRO_0000018426" description="Gamma-hemolysin component C">
    <location>
        <begin position="30"/>
        <end position="315"/>
    </location>
</feature>
<organism>
    <name type="scientific">Staphylococcus aureus</name>
    <dbReference type="NCBI Taxonomy" id="1280"/>
    <lineage>
        <taxon>Bacteria</taxon>
        <taxon>Bacillati</taxon>
        <taxon>Bacillota</taxon>
        <taxon>Bacilli</taxon>
        <taxon>Bacillales</taxon>
        <taxon>Staphylococcaceae</taxon>
        <taxon>Staphylococcus</taxon>
    </lineage>
</organism>